<dbReference type="EMBL" id="AC015631">
    <property type="status" value="NOT_ANNOTATED_CDS"/>
    <property type="molecule type" value="Genomic_DNA"/>
</dbReference>
<dbReference type="EMBL" id="BX648831">
    <property type="status" value="NOT_ANNOTATED_CDS"/>
    <property type="molecule type" value="mRNA"/>
</dbReference>
<dbReference type="CCDS" id="CCDS47135.1"/>
<dbReference type="RefSeq" id="NP_001108206.3">
    <property type="nucleotide sequence ID" value="NM_001114734.2"/>
</dbReference>
<dbReference type="RefSeq" id="NP_001350514.1">
    <property type="nucleotide sequence ID" value="NM_001363585.1"/>
</dbReference>
<dbReference type="SMR" id="P0CB38"/>
<dbReference type="FunCoup" id="P0CB38">
    <property type="interactions" value="493"/>
</dbReference>
<dbReference type="IntAct" id="P0CB38">
    <property type="interactions" value="58"/>
</dbReference>
<dbReference type="STRING" id="9606.ENSP00000463233"/>
<dbReference type="iPTMnet" id="P0CB38"/>
<dbReference type="PhosphoSitePlus" id="P0CB38"/>
<dbReference type="BioMuta" id="PABPC4L"/>
<dbReference type="DMDM" id="259515737"/>
<dbReference type="jPOST" id="P0CB38"/>
<dbReference type="MassIVE" id="P0CB38"/>
<dbReference type="PaxDb" id="9606-ENSP00000463233"/>
<dbReference type="PeptideAtlas" id="P0CB38"/>
<dbReference type="ProteomicsDB" id="52433"/>
<dbReference type="Pumba" id="P0CB38"/>
<dbReference type="Antibodypedia" id="68021">
    <property type="antibodies" value="48 antibodies from 8 providers"/>
</dbReference>
<dbReference type="Ensembl" id="ENST00000421491.4">
    <property type="protein sequence ID" value="ENSP00000463233.1"/>
    <property type="gene ID" value="ENSG00000254535.4"/>
</dbReference>
<dbReference type="GeneID" id="132430"/>
<dbReference type="MANE-Select" id="ENST00000421491.4">
    <property type="protein sequence ID" value="ENSP00000463233.1"/>
    <property type="RefSeq nucleotide sequence ID" value="NM_001114734.2"/>
    <property type="RefSeq protein sequence ID" value="NP_001108206.3"/>
</dbReference>
<dbReference type="UCSC" id="uc010ioe.4">
    <property type="organism name" value="human"/>
</dbReference>
<dbReference type="AGR" id="HGNC:31955"/>
<dbReference type="GeneCards" id="PABPC4L"/>
<dbReference type="HGNC" id="HGNC:31955">
    <property type="gene designation" value="PABPC4L"/>
</dbReference>
<dbReference type="HPA" id="ENSG00000254535">
    <property type="expression patterns" value="Tissue enhanced (placenta)"/>
</dbReference>
<dbReference type="MalaCards" id="PABPC4L"/>
<dbReference type="neXtProt" id="NX_P0CB38"/>
<dbReference type="OpenTargets" id="ENSG00000254535"/>
<dbReference type="VEuPathDB" id="HostDB:ENSG00000254535"/>
<dbReference type="eggNOG" id="KOG0123">
    <property type="taxonomic scope" value="Eukaryota"/>
</dbReference>
<dbReference type="GeneTree" id="ENSGT00940000163344"/>
<dbReference type="HOGENOM" id="CLU_012062_22_6_1"/>
<dbReference type="InParanoid" id="P0CB38"/>
<dbReference type="OMA" id="CQGVKLY"/>
<dbReference type="OrthoDB" id="19742at2759"/>
<dbReference type="PAN-GO" id="P0CB38">
    <property type="GO annotations" value="7 GO annotations based on evolutionary models"/>
</dbReference>
<dbReference type="PhylomeDB" id="P0CB38"/>
<dbReference type="PathwayCommons" id="P0CB38"/>
<dbReference type="SignaLink" id="P0CB38"/>
<dbReference type="CD-CODE" id="DEE660B4">
    <property type="entry name" value="Stress granule"/>
</dbReference>
<dbReference type="ChiTaRS" id="PABPC4L">
    <property type="organism name" value="human"/>
</dbReference>
<dbReference type="Pharos" id="P0CB38">
    <property type="development level" value="Tdark"/>
</dbReference>
<dbReference type="PRO" id="PR:P0CB38"/>
<dbReference type="Proteomes" id="UP000005640">
    <property type="component" value="Chromosome 4"/>
</dbReference>
<dbReference type="RNAct" id="P0CB38">
    <property type="molecule type" value="protein"/>
</dbReference>
<dbReference type="Bgee" id="ENSG00000254535">
    <property type="expression patterns" value="Expressed in male germ line stem cell (sensu Vertebrata) in testis and 105 other cell types or tissues"/>
</dbReference>
<dbReference type="GO" id="GO:0010494">
    <property type="term" value="C:cytoplasmic stress granule"/>
    <property type="evidence" value="ECO:0000318"/>
    <property type="project" value="GO_Central"/>
</dbReference>
<dbReference type="GO" id="GO:0005829">
    <property type="term" value="C:cytosol"/>
    <property type="evidence" value="ECO:0000318"/>
    <property type="project" value="GO_Central"/>
</dbReference>
<dbReference type="GO" id="GO:0005634">
    <property type="term" value="C:nucleus"/>
    <property type="evidence" value="ECO:0000318"/>
    <property type="project" value="GO_Central"/>
</dbReference>
<dbReference type="GO" id="GO:1990904">
    <property type="term" value="C:ribonucleoprotein complex"/>
    <property type="evidence" value="ECO:0000318"/>
    <property type="project" value="GO_Central"/>
</dbReference>
<dbReference type="GO" id="GO:0003730">
    <property type="term" value="F:mRNA 3'-UTR binding"/>
    <property type="evidence" value="ECO:0000318"/>
    <property type="project" value="GO_Central"/>
</dbReference>
<dbReference type="GO" id="GO:0008143">
    <property type="term" value="F:poly(A) binding"/>
    <property type="evidence" value="ECO:0000318"/>
    <property type="project" value="GO_Central"/>
</dbReference>
<dbReference type="GO" id="GO:0008266">
    <property type="term" value="F:poly(U) RNA binding"/>
    <property type="evidence" value="ECO:0000318"/>
    <property type="project" value="GO_Central"/>
</dbReference>
<dbReference type="CDD" id="cd12378">
    <property type="entry name" value="RRM1_I_PABPs"/>
    <property type="match status" value="1"/>
</dbReference>
<dbReference type="CDD" id="cd12379">
    <property type="entry name" value="RRM2_I_PABPs"/>
    <property type="match status" value="1"/>
</dbReference>
<dbReference type="CDD" id="cd12380">
    <property type="entry name" value="RRM3_I_PABPs"/>
    <property type="match status" value="1"/>
</dbReference>
<dbReference type="CDD" id="cd12381">
    <property type="entry name" value="RRM4_I_PABPs"/>
    <property type="match status" value="1"/>
</dbReference>
<dbReference type="FunFam" id="3.30.70.330:FF:000003">
    <property type="entry name" value="Polyadenylate-binding protein"/>
    <property type="match status" value="1"/>
</dbReference>
<dbReference type="FunFam" id="3.30.70.330:FF:000021">
    <property type="entry name" value="Polyadenylate-binding protein"/>
    <property type="match status" value="1"/>
</dbReference>
<dbReference type="FunFam" id="3.30.70.330:FF:000049">
    <property type="entry name" value="Polyadenylate-binding protein"/>
    <property type="match status" value="1"/>
</dbReference>
<dbReference type="FunFam" id="3.30.70.330:FF:000091">
    <property type="entry name" value="Polyadenylate-binding protein"/>
    <property type="match status" value="1"/>
</dbReference>
<dbReference type="Gene3D" id="3.30.70.330">
    <property type="match status" value="4"/>
</dbReference>
<dbReference type="InterPro" id="IPR012677">
    <property type="entry name" value="Nucleotide-bd_a/b_plait_sf"/>
</dbReference>
<dbReference type="InterPro" id="IPR006515">
    <property type="entry name" value="PABP_1234"/>
</dbReference>
<dbReference type="InterPro" id="IPR034364">
    <property type="entry name" value="PABP_RRM1"/>
</dbReference>
<dbReference type="InterPro" id="IPR035979">
    <property type="entry name" value="RBD_domain_sf"/>
</dbReference>
<dbReference type="InterPro" id="IPR045305">
    <property type="entry name" value="RRM2_I_PABPs"/>
</dbReference>
<dbReference type="InterPro" id="IPR000504">
    <property type="entry name" value="RRM_dom"/>
</dbReference>
<dbReference type="InterPro" id="IPR003954">
    <property type="entry name" value="RRM_dom_euk"/>
</dbReference>
<dbReference type="NCBIfam" id="TIGR01628">
    <property type="entry name" value="PABP-1234"/>
    <property type="match status" value="1"/>
</dbReference>
<dbReference type="PANTHER" id="PTHR24012">
    <property type="entry name" value="RNA BINDING PROTEIN"/>
    <property type="match status" value="1"/>
</dbReference>
<dbReference type="Pfam" id="PF00076">
    <property type="entry name" value="RRM_1"/>
    <property type="match status" value="4"/>
</dbReference>
<dbReference type="SMART" id="SM00360">
    <property type="entry name" value="RRM"/>
    <property type="match status" value="4"/>
</dbReference>
<dbReference type="SMART" id="SM00361">
    <property type="entry name" value="RRM_1"/>
    <property type="match status" value="3"/>
</dbReference>
<dbReference type="SUPFAM" id="SSF54928">
    <property type="entry name" value="RNA-binding domain, RBD"/>
    <property type="match status" value="2"/>
</dbReference>
<dbReference type="PROSITE" id="PS50102">
    <property type="entry name" value="RRM"/>
    <property type="match status" value="4"/>
</dbReference>
<protein>
    <recommendedName>
        <fullName>Polyadenylate-binding protein 4-like</fullName>
        <shortName>PABP-4-like</shortName>
        <shortName>Poly(A)-binding protein 4-like</shortName>
    </recommendedName>
</protein>
<keyword id="KW-1267">Proteomics identification</keyword>
<keyword id="KW-1185">Reference proteome</keyword>
<keyword id="KW-0677">Repeat</keyword>
<keyword id="KW-0694">RNA-binding</keyword>
<comment type="function">
    <text evidence="2">May bind RNA.</text>
</comment>
<comment type="similarity">
    <text evidence="2">Belongs to the polyadenylate-binding protein type-1 family.</text>
</comment>
<gene>
    <name type="primary">PABPC4L</name>
</gene>
<organism>
    <name type="scientific">Homo sapiens</name>
    <name type="common">Human</name>
    <dbReference type="NCBI Taxonomy" id="9606"/>
    <lineage>
        <taxon>Eukaryota</taxon>
        <taxon>Metazoa</taxon>
        <taxon>Chordata</taxon>
        <taxon>Craniata</taxon>
        <taxon>Vertebrata</taxon>
        <taxon>Euteleostomi</taxon>
        <taxon>Mammalia</taxon>
        <taxon>Eutheria</taxon>
        <taxon>Euarchontoglires</taxon>
        <taxon>Primates</taxon>
        <taxon>Haplorrhini</taxon>
        <taxon>Catarrhini</taxon>
        <taxon>Hominidae</taxon>
        <taxon>Homo</taxon>
    </lineage>
</organism>
<accession>P0CB38</accession>
<evidence type="ECO:0000255" key="1">
    <source>
        <dbReference type="PROSITE-ProRule" id="PRU00176"/>
    </source>
</evidence>
<evidence type="ECO:0000305" key="2"/>
<name>PAB4L_HUMAN</name>
<reference key="1">
    <citation type="journal article" date="2005" name="Nature">
        <title>Generation and annotation of the DNA sequences of human chromosomes 2 and 4.</title>
        <authorList>
            <person name="Hillier L.W."/>
            <person name="Graves T.A."/>
            <person name="Fulton R.S."/>
            <person name="Fulton L.A."/>
            <person name="Pepin K.H."/>
            <person name="Minx P."/>
            <person name="Wagner-McPherson C."/>
            <person name="Layman D."/>
            <person name="Wylie K."/>
            <person name="Sekhon M."/>
            <person name="Becker M.C."/>
            <person name="Fewell G.A."/>
            <person name="Delehaunty K.D."/>
            <person name="Miner T.L."/>
            <person name="Nash W.E."/>
            <person name="Kremitzki C."/>
            <person name="Oddy L."/>
            <person name="Du H."/>
            <person name="Sun H."/>
            <person name="Bradshaw-Cordum H."/>
            <person name="Ali J."/>
            <person name="Carter J."/>
            <person name="Cordes M."/>
            <person name="Harris A."/>
            <person name="Isak A."/>
            <person name="van Brunt A."/>
            <person name="Nguyen C."/>
            <person name="Du F."/>
            <person name="Courtney L."/>
            <person name="Kalicki J."/>
            <person name="Ozersky P."/>
            <person name="Abbott S."/>
            <person name="Armstrong J."/>
            <person name="Belter E.A."/>
            <person name="Caruso L."/>
            <person name="Cedroni M."/>
            <person name="Cotton M."/>
            <person name="Davidson T."/>
            <person name="Desai A."/>
            <person name="Elliott G."/>
            <person name="Erb T."/>
            <person name="Fronick C."/>
            <person name="Gaige T."/>
            <person name="Haakenson W."/>
            <person name="Haglund K."/>
            <person name="Holmes A."/>
            <person name="Harkins R."/>
            <person name="Kim K."/>
            <person name="Kruchowski S.S."/>
            <person name="Strong C.M."/>
            <person name="Grewal N."/>
            <person name="Goyea E."/>
            <person name="Hou S."/>
            <person name="Levy A."/>
            <person name="Martinka S."/>
            <person name="Mead K."/>
            <person name="McLellan M.D."/>
            <person name="Meyer R."/>
            <person name="Randall-Maher J."/>
            <person name="Tomlinson C."/>
            <person name="Dauphin-Kohlberg S."/>
            <person name="Kozlowicz-Reilly A."/>
            <person name="Shah N."/>
            <person name="Swearengen-Shahid S."/>
            <person name="Snider J."/>
            <person name="Strong J.T."/>
            <person name="Thompson J."/>
            <person name="Yoakum M."/>
            <person name="Leonard S."/>
            <person name="Pearman C."/>
            <person name="Trani L."/>
            <person name="Radionenko M."/>
            <person name="Waligorski J.E."/>
            <person name="Wang C."/>
            <person name="Rock S.M."/>
            <person name="Tin-Wollam A.-M."/>
            <person name="Maupin R."/>
            <person name="Latreille P."/>
            <person name="Wendl M.C."/>
            <person name="Yang S.-P."/>
            <person name="Pohl C."/>
            <person name="Wallis J.W."/>
            <person name="Spieth J."/>
            <person name="Bieri T.A."/>
            <person name="Berkowicz N."/>
            <person name="Nelson J.O."/>
            <person name="Osborne J."/>
            <person name="Ding L."/>
            <person name="Meyer R."/>
            <person name="Sabo A."/>
            <person name="Shotland Y."/>
            <person name="Sinha P."/>
            <person name="Wohldmann P.E."/>
            <person name="Cook L.L."/>
            <person name="Hickenbotham M.T."/>
            <person name="Eldred J."/>
            <person name="Williams D."/>
            <person name="Jones T.A."/>
            <person name="She X."/>
            <person name="Ciccarelli F.D."/>
            <person name="Izaurralde E."/>
            <person name="Taylor J."/>
            <person name="Schmutz J."/>
            <person name="Myers R.M."/>
            <person name="Cox D.R."/>
            <person name="Huang X."/>
            <person name="McPherson J.D."/>
            <person name="Mardis E.R."/>
            <person name="Clifton S.W."/>
            <person name="Warren W.C."/>
            <person name="Chinwalla A.T."/>
            <person name="Eddy S.R."/>
            <person name="Marra M.A."/>
            <person name="Ovcharenko I."/>
            <person name="Furey T.S."/>
            <person name="Miller W."/>
            <person name="Eichler E.E."/>
            <person name="Bork P."/>
            <person name="Suyama M."/>
            <person name="Torrents D."/>
            <person name="Waterston R.H."/>
            <person name="Wilson R.K."/>
        </authorList>
    </citation>
    <scope>NUCLEOTIDE SEQUENCE [LARGE SCALE GENOMIC DNA]</scope>
</reference>
<reference key="2">
    <citation type="journal article" date="2007" name="BMC Genomics">
        <title>The full-ORF clone resource of the German cDNA consortium.</title>
        <authorList>
            <person name="Bechtel S."/>
            <person name="Rosenfelder H."/>
            <person name="Duda A."/>
            <person name="Schmidt C.P."/>
            <person name="Ernst U."/>
            <person name="Wellenreuther R."/>
            <person name="Mehrle A."/>
            <person name="Schuster C."/>
            <person name="Bahr A."/>
            <person name="Bloecker H."/>
            <person name="Heubner D."/>
            <person name="Hoerlein A."/>
            <person name="Michel G."/>
            <person name="Wedler H."/>
            <person name="Koehrer K."/>
            <person name="Ottenwaelder B."/>
            <person name="Poustka A."/>
            <person name="Wiemann S."/>
            <person name="Schupp I."/>
        </authorList>
    </citation>
    <scope>NUCLEOTIDE SEQUENCE [LARGE SCALE MRNA] OF 220-370</scope>
    <source>
        <tissue>Fetal kidney</tissue>
    </source>
</reference>
<feature type="chain" id="PRO_0000383673" description="Polyadenylate-binding protein 4-like">
    <location>
        <begin position="1"/>
        <end position="370"/>
    </location>
</feature>
<feature type="domain" description="RRM 1" evidence="1">
    <location>
        <begin position="10"/>
        <end position="88"/>
    </location>
</feature>
<feature type="domain" description="RRM 2" evidence="1">
    <location>
        <begin position="98"/>
        <end position="174"/>
    </location>
</feature>
<feature type="domain" description="RRM 3" evidence="1">
    <location>
        <begin position="190"/>
        <end position="267"/>
    </location>
</feature>
<feature type="domain" description="RRM 4" evidence="1">
    <location>
        <begin position="293"/>
        <end position="369"/>
    </location>
</feature>
<feature type="sequence variant" id="VAR_060185" description="In dbSNP:rs10009368.">
    <original>V</original>
    <variation>I</variation>
    <location>
        <position position="192"/>
    </location>
</feature>
<feature type="sequence variant" id="VAR_060186" description="In dbSNP:rs6830036.">
    <original>S</original>
    <variation>N</variation>
    <location>
        <position position="331"/>
    </location>
</feature>
<feature type="sequence variant" id="VAR_060187" description="In dbSNP:rs11099273.">
    <original>H</original>
    <variation>P</variation>
    <location>
        <position position="370"/>
    </location>
</feature>
<proteinExistence type="evidence at protein level"/>
<sequence length="370" mass="41854">MNVAAKYRMASLYVGDLHADVTEDLLFRKFSTVGPVLSIRICRDQVTRRSLGYAYVNFLQLADAQKALDTMNFDIIKGKSIRLMWSQRDAYLRRSGIGNVFIKNLDKSIDNKTLYEHFSAFGKILSSKVMSDDQGSKGYAFVHFQNQSAADRAIEEMNGKLLKGCKVFVGRFKNRKDREAELRSKASEFTNVYIKNFGGDMDDERLKDVFSKYGKTLSVKVMTDSSGKSKGFGFVSFDSHEAAKKAVEEMNGRDINGQLIFVGRAQKKVERQAELKQMFEQLKRERIRGCQGVKLYIKNLDDTIDDEKLRNEFSSFGSISRVKVMQEEGQSKGFGLICFSSPEDATKAMTEMNGRILGSKPLSIALAQRH</sequence>